<evidence type="ECO:0000250" key="1">
    <source>
        <dbReference type="UniProtKB" id="A0A1Z0YU59"/>
    </source>
</evidence>
<evidence type="ECO:0000255" key="2">
    <source>
        <dbReference type="PROSITE-ProRule" id="PRU00031"/>
    </source>
</evidence>
<evidence type="ECO:0000269" key="3">
    <source>
    </source>
</evidence>
<evidence type="ECO:0000303" key="4">
    <source>
    </source>
</evidence>
<evidence type="ECO:0000305" key="5"/>
<evidence type="ECO:0000305" key="6">
    <source>
    </source>
</evidence>
<sequence>RPSFCNLPVKPGPCSGFFSAFYYSQKTNKCHSFTYGGCRGPGNRFRTIEECRRTCVG</sequence>
<protein>
    <recommendedName>
        <fullName evidence="4">Mambaquaretin-6</fullName>
        <shortName evidence="4">MQ6</shortName>
    </recommendedName>
    <alternativeName>
        <fullName evidence="4">Upsilon-Dv2d</fullName>
    </alternativeName>
</protein>
<reference key="1">
    <citation type="journal article" date="2022" name="Br. J. Pharmacol.">
        <title>A new Kunitz-type snake toxin family associated with an original mode of interaction with the vasopressin 2 receptor.</title>
        <authorList>
            <person name="Droctove L."/>
            <person name="Ciolek J."/>
            <person name="Mendre C."/>
            <person name="Chorfa A."/>
            <person name="Huerta P."/>
            <person name="Carvalho C."/>
            <person name="Gouin C."/>
            <person name="Lancien M."/>
            <person name="Stanajic-Petrovic G."/>
            <person name="Braco L."/>
            <person name="Blanchet G."/>
            <person name="Upert G."/>
            <person name="De Pauw G."/>
            <person name="Barbe P."/>
            <person name="Keck M."/>
            <person name="Mourier G."/>
            <person name="Mouillac B."/>
            <person name="Denis S."/>
            <person name="Rodriguez de la Vega R.C."/>
            <person name="Quinton L."/>
            <person name="Gilles N."/>
        </authorList>
    </citation>
    <scope>PROTEIN SEQUENCE</scope>
    <scope>FUNCTION</scope>
    <scope>BIOASSAY</scope>
    <scope>SUBCELLULAR LOCATION</scope>
    <scope>SYNTHESIS</scope>
    <scope>MASS SPECTROMETRY</scope>
    <source>
        <tissue>Venom</tissue>
    </source>
</reference>
<comment type="function">
    <text evidence="3">Interacts with vasopressin V2 receptor (V2R/AVPR2), probably in a selective manner (PubMed:35122240). Inhibits vasopressin binding human V2R in the nanomolar range (Ki=21.5 nM), and also moderately inhibits vasopressin-induced cAMP production (IC(50)=574 nM). In vivo, intraperitoneal injection of this protein into rats increases diuresis by 2-fold, without any loss of electrolytes (PubMed:35122240).</text>
</comment>
<comment type="subcellular location">
    <subcellularLocation>
        <location evidence="3">Secreted</location>
    </subcellularLocation>
</comment>
<comment type="tissue specificity">
    <text evidence="6">Expressed by the venom gland.</text>
</comment>
<comment type="domain">
    <text evidence="1">Exploits its two major loops and engages more positions in its interaction with V2R. The pharmacophore defined by numerous amino acids positioned in loop 1 (9 to 18) and loop 2 (34, 39 and 44) may be at the origin of the absolute selectivity of this protein for V2R.</text>
</comment>
<comment type="mass spectrometry">
    <text>Monoisotopic mass.</text>
</comment>
<comment type="similarity">
    <text evidence="5">Belongs to the venom Kunitz-type family.</text>
</comment>
<keyword id="KW-0903">Direct protein sequencing</keyword>
<keyword id="KW-1015">Disulfide bond</keyword>
<keyword id="KW-1213">G-protein coupled receptor impairing toxin</keyword>
<keyword id="KW-0964">Secreted</keyword>
<keyword id="KW-0800">Toxin</keyword>
<feature type="chain" id="PRO_0000457571" description="Mambaquaretin-6" evidence="3">
    <location>
        <begin position="1"/>
        <end position="57"/>
    </location>
</feature>
<feature type="domain" description="BPTI/Kunitz inhibitor" evidence="2">
    <location>
        <begin position="5"/>
        <end position="55"/>
    </location>
</feature>
<feature type="disulfide bond" evidence="1">
    <location>
        <begin position="5"/>
        <end position="55"/>
    </location>
</feature>
<feature type="disulfide bond" evidence="1">
    <location>
        <begin position="14"/>
        <end position="38"/>
    </location>
</feature>
<feature type="disulfide bond" evidence="1">
    <location>
        <begin position="30"/>
        <end position="51"/>
    </location>
</feature>
<organism>
    <name type="scientific">Dendroaspis viridis</name>
    <name type="common">Western green mamba</name>
    <dbReference type="NCBI Taxonomy" id="8621"/>
    <lineage>
        <taxon>Eukaryota</taxon>
        <taxon>Metazoa</taxon>
        <taxon>Chordata</taxon>
        <taxon>Craniata</taxon>
        <taxon>Vertebrata</taxon>
        <taxon>Euteleostomi</taxon>
        <taxon>Lepidosauria</taxon>
        <taxon>Squamata</taxon>
        <taxon>Bifurcata</taxon>
        <taxon>Unidentata</taxon>
        <taxon>Episquamata</taxon>
        <taxon>Toxicofera</taxon>
        <taxon>Serpentes</taxon>
        <taxon>Colubroidea</taxon>
        <taxon>Elapidae</taxon>
        <taxon>Elapinae</taxon>
        <taxon>Dendroaspis</taxon>
    </lineage>
</organism>
<proteinExistence type="evidence at protein level"/>
<name>MAMB6_DENVI</name>
<accession>C0HLA9</accession>
<dbReference type="SMR" id="C0HLA9"/>
<dbReference type="GO" id="GO:0005615">
    <property type="term" value="C:extracellular space"/>
    <property type="evidence" value="ECO:0007669"/>
    <property type="project" value="TreeGrafter"/>
</dbReference>
<dbReference type="GO" id="GO:0004867">
    <property type="term" value="F:serine-type endopeptidase inhibitor activity"/>
    <property type="evidence" value="ECO:0007669"/>
    <property type="project" value="InterPro"/>
</dbReference>
<dbReference type="GO" id="GO:0090729">
    <property type="term" value="F:toxin activity"/>
    <property type="evidence" value="ECO:0007669"/>
    <property type="project" value="UniProtKB-KW"/>
</dbReference>
<dbReference type="CDD" id="cd22595">
    <property type="entry name" value="Kunitz_dendrotoxin"/>
    <property type="match status" value="1"/>
</dbReference>
<dbReference type="FunFam" id="4.10.410.10:FF:000004">
    <property type="entry name" value="Tissue factor pathway inhibitor"/>
    <property type="match status" value="1"/>
</dbReference>
<dbReference type="Gene3D" id="4.10.410.10">
    <property type="entry name" value="Pancreatic trypsin inhibitor Kunitz domain"/>
    <property type="match status" value="1"/>
</dbReference>
<dbReference type="InterPro" id="IPR002223">
    <property type="entry name" value="Kunitz_BPTI"/>
</dbReference>
<dbReference type="InterPro" id="IPR036880">
    <property type="entry name" value="Kunitz_BPTI_sf"/>
</dbReference>
<dbReference type="InterPro" id="IPR020901">
    <property type="entry name" value="Prtase_inh_Kunz-CS"/>
</dbReference>
<dbReference type="InterPro" id="IPR050098">
    <property type="entry name" value="TFPI/VKTCI-like"/>
</dbReference>
<dbReference type="PANTHER" id="PTHR10083:SF217">
    <property type="entry name" value="BOOPHILIN-H2"/>
    <property type="match status" value="1"/>
</dbReference>
<dbReference type="PANTHER" id="PTHR10083">
    <property type="entry name" value="KUNITZ-TYPE PROTEASE INHIBITOR-RELATED"/>
    <property type="match status" value="1"/>
</dbReference>
<dbReference type="Pfam" id="PF00014">
    <property type="entry name" value="Kunitz_BPTI"/>
    <property type="match status" value="1"/>
</dbReference>
<dbReference type="PRINTS" id="PR00759">
    <property type="entry name" value="BASICPTASE"/>
</dbReference>
<dbReference type="SMART" id="SM00131">
    <property type="entry name" value="KU"/>
    <property type="match status" value="1"/>
</dbReference>
<dbReference type="SUPFAM" id="SSF57362">
    <property type="entry name" value="BPTI-like"/>
    <property type="match status" value="1"/>
</dbReference>
<dbReference type="PROSITE" id="PS00280">
    <property type="entry name" value="BPTI_KUNITZ_1"/>
    <property type="match status" value="1"/>
</dbReference>
<dbReference type="PROSITE" id="PS50279">
    <property type="entry name" value="BPTI_KUNITZ_2"/>
    <property type="match status" value="1"/>
</dbReference>